<protein>
    <recommendedName>
        <fullName evidence="1">Glycerol-3-phosphate acyltransferase</fullName>
        <shortName evidence="1">GPAT</shortName>
        <ecNumber evidence="1">2.3.1.15</ecNumber>
    </recommendedName>
</protein>
<accession>B0U229</accession>
<feature type="chain" id="PRO_1000123102" description="Glycerol-3-phosphate acyltransferase">
    <location>
        <begin position="1"/>
        <end position="863"/>
    </location>
</feature>
<feature type="region of interest" description="Disordered" evidence="2">
    <location>
        <begin position="1"/>
        <end position="29"/>
    </location>
</feature>
<feature type="short sequence motif" description="HXXXXD motif">
    <location>
        <begin position="343"/>
        <end position="348"/>
    </location>
</feature>
<feature type="compositionally biased region" description="Polar residues" evidence="2">
    <location>
        <begin position="12"/>
        <end position="29"/>
    </location>
</feature>
<gene>
    <name evidence="1" type="primary">plsB</name>
    <name type="ordered locus">Xfasm12_0345</name>
</gene>
<dbReference type="EC" id="2.3.1.15" evidence="1"/>
<dbReference type="EMBL" id="CP000941">
    <property type="protein sequence ID" value="ACA11363.1"/>
    <property type="molecule type" value="Genomic_DNA"/>
</dbReference>
<dbReference type="SMR" id="B0U229"/>
<dbReference type="KEGG" id="xfm:Xfasm12_0345"/>
<dbReference type="HOGENOM" id="CLU_015407_0_0_6"/>
<dbReference type="UniPathway" id="UPA00557">
    <property type="reaction ID" value="UER00612"/>
</dbReference>
<dbReference type="GO" id="GO:0005886">
    <property type="term" value="C:plasma membrane"/>
    <property type="evidence" value="ECO:0007669"/>
    <property type="project" value="UniProtKB-SubCell"/>
</dbReference>
<dbReference type="GO" id="GO:0004366">
    <property type="term" value="F:glycerol-3-phosphate O-acyltransferase activity"/>
    <property type="evidence" value="ECO:0007669"/>
    <property type="project" value="UniProtKB-UniRule"/>
</dbReference>
<dbReference type="GO" id="GO:0016024">
    <property type="term" value="P:CDP-diacylglycerol biosynthetic process"/>
    <property type="evidence" value="ECO:0007669"/>
    <property type="project" value="UniProtKB-UniRule"/>
</dbReference>
<dbReference type="GO" id="GO:0006631">
    <property type="term" value="P:fatty acid metabolic process"/>
    <property type="evidence" value="ECO:0007669"/>
    <property type="project" value="TreeGrafter"/>
</dbReference>
<dbReference type="CDD" id="cd07993">
    <property type="entry name" value="LPLAT_DHAPAT-like"/>
    <property type="match status" value="1"/>
</dbReference>
<dbReference type="HAMAP" id="MF_00393">
    <property type="entry name" value="Glyc3P_acyltrans"/>
    <property type="match status" value="1"/>
</dbReference>
<dbReference type="InterPro" id="IPR022284">
    <property type="entry name" value="GPAT/DHAPAT"/>
</dbReference>
<dbReference type="InterPro" id="IPR045520">
    <property type="entry name" value="GPAT/DHAPAT_C"/>
</dbReference>
<dbReference type="InterPro" id="IPR041728">
    <property type="entry name" value="GPAT/DHAPAT_LPLAT"/>
</dbReference>
<dbReference type="InterPro" id="IPR028354">
    <property type="entry name" value="GPAT_PlsB"/>
</dbReference>
<dbReference type="InterPro" id="IPR002123">
    <property type="entry name" value="Plipid/glycerol_acylTrfase"/>
</dbReference>
<dbReference type="NCBIfam" id="TIGR03703">
    <property type="entry name" value="plsB"/>
    <property type="match status" value="1"/>
</dbReference>
<dbReference type="NCBIfam" id="NF003441">
    <property type="entry name" value="PRK04974.1"/>
    <property type="match status" value="1"/>
</dbReference>
<dbReference type="PANTHER" id="PTHR12563:SF17">
    <property type="entry name" value="DIHYDROXYACETONE PHOSPHATE ACYLTRANSFERASE"/>
    <property type="match status" value="1"/>
</dbReference>
<dbReference type="PANTHER" id="PTHR12563">
    <property type="entry name" value="GLYCEROL-3-PHOSPHATE ACYLTRANSFERASE"/>
    <property type="match status" value="1"/>
</dbReference>
<dbReference type="Pfam" id="PF01553">
    <property type="entry name" value="Acyltransferase"/>
    <property type="match status" value="1"/>
</dbReference>
<dbReference type="Pfam" id="PF19277">
    <property type="entry name" value="GPAT_C"/>
    <property type="match status" value="1"/>
</dbReference>
<dbReference type="PIRSF" id="PIRSF500064">
    <property type="entry name" value="GPAT"/>
    <property type="match status" value="1"/>
</dbReference>
<dbReference type="PIRSF" id="PIRSF000437">
    <property type="entry name" value="GPAT_DHAPAT"/>
    <property type="match status" value="1"/>
</dbReference>
<dbReference type="SMART" id="SM00563">
    <property type="entry name" value="PlsC"/>
    <property type="match status" value="1"/>
</dbReference>
<dbReference type="SUPFAM" id="SSF69593">
    <property type="entry name" value="Glycerol-3-phosphate (1)-acyltransferase"/>
    <property type="match status" value="1"/>
</dbReference>
<comment type="catalytic activity">
    <reaction evidence="1">
        <text>sn-glycerol 3-phosphate + an acyl-CoA = a 1-acyl-sn-glycero-3-phosphate + CoA</text>
        <dbReference type="Rhea" id="RHEA:15325"/>
        <dbReference type="ChEBI" id="CHEBI:57287"/>
        <dbReference type="ChEBI" id="CHEBI:57597"/>
        <dbReference type="ChEBI" id="CHEBI:57970"/>
        <dbReference type="ChEBI" id="CHEBI:58342"/>
        <dbReference type="EC" id="2.3.1.15"/>
    </reaction>
</comment>
<comment type="pathway">
    <text evidence="1">Phospholipid metabolism; CDP-diacylglycerol biosynthesis; CDP-diacylglycerol from sn-glycerol 3-phosphate: step 1/3.</text>
</comment>
<comment type="subcellular location">
    <subcellularLocation>
        <location evidence="1">Cell inner membrane</location>
        <topology evidence="1">Peripheral membrane protein</topology>
        <orientation evidence="1">Cytoplasmic side</orientation>
    </subcellularLocation>
</comment>
<comment type="domain">
    <text evidence="1">The HXXXXD motif is essential for acyltransferase activity and may constitute the binding site for the phosphate moiety of the glycerol-3-phosphate.</text>
</comment>
<comment type="similarity">
    <text evidence="1">Belongs to the GPAT/DAPAT family.</text>
</comment>
<evidence type="ECO:0000255" key="1">
    <source>
        <dbReference type="HAMAP-Rule" id="MF_00393"/>
    </source>
</evidence>
<evidence type="ECO:0000256" key="2">
    <source>
        <dbReference type="SAM" id="MobiDB-lite"/>
    </source>
</evidence>
<organism>
    <name type="scientific">Xylella fastidiosa (strain M12)</name>
    <dbReference type="NCBI Taxonomy" id="405440"/>
    <lineage>
        <taxon>Bacteria</taxon>
        <taxon>Pseudomonadati</taxon>
        <taxon>Pseudomonadota</taxon>
        <taxon>Gammaproteobacteria</taxon>
        <taxon>Lysobacterales</taxon>
        <taxon>Lysobacteraceae</taxon>
        <taxon>Xylella</taxon>
    </lineage>
</organism>
<reference key="1">
    <citation type="journal article" date="2010" name="J. Bacteriol.">
        <title>Whole genome sequences of two Xylella fastidiosa strains (M12 and M23) causing almond leaf scorch disease in California.</title>
        <authorList>
            <person name="Chen J."/>
            <person name="Xie G."/>
            <person name="Han S."/>
            <person name="Chertkov O."/>
            <person name="Sims D."/>
            <person name="Civerolo E.L."/>
        </authorList>
    </citation>
    <scope>NUCLEOTIDE SEQUENCE [LARGE SCALE GENOMIC DNA]</scope>
    <source>
        <strain>M12</strain>
    </source>
</reference>
<keyword id="KW-0012">Acyltransferase</keyword>
<keyword id="KW-0997">Cell inner membrane</keyword>
<keyword id="KW-1003">Cell membrane</keyword>
<keyword id="KW-0444">Lipid biosynthesis</keyword>
<keyword id="KW-0443">Lipid metabolism</keyword>
<keyword id="KW-0472">Membrane</keyword>
<keyword id="KW-0594">Phospholipid biosynthesis</keyword>
<keyword id="KW-1208">Phospholipid metabolism</keyword>
<keyword id="KW-0808">Transferase</keyword>
<proteinExistence type="inferred from homology"/>
<name>PLSB_XYLFM</name>
<sequence length="863" mass="97699">MPKKNSPLLPKETTTTQSSVDTSGSSNLTWPVSEHSIRRPLWARLLGQMLDPWLDLSIEPEHSVQYNDGRPIIYVLEDYGLCNTLILDKACRKTKLPSPLIPLPDNPLQRKRAYLALSRRSSSNSLIPNQRGGKTHSDSLANLLQAHRIRDTLDVHLVPVSIFIGRTPDRQSGWFAVLFSENWALVGRFRRLLAVLLNGRNTIVCFAPPISVRQTLNEGLPPERTLRKLQRVLRTHFRRIRETVIGPDLSTRRLLVDNVLATEAVREAIAAQAKRDGTDLSETWRKAQAYAWEIAADYSSPVIRSADFLFSHVWNRIYAGVLIHHVDSFKETAPGHEVVYVPSHRSHIDYMLLSYCLYQCGIVLPHIVAGINLNLPIVGTLLRKCGAFFIRRSIKGNMLYSIVLSEYVAQLVAGGYSLEYFIEGGRSRTGRLLQPKGGMIMMTLQAFLRQPRRPVLFQPIYIGYEKLIEGTSYLDELSGEPKKKESIWRLFWNIPKVLKQKYGQVVVNFGEPIALNDVLAELAPEWEGQALNENEKPAWLSSTVNHLARQIQTRINSAADVNPINLLALALLSTPKHAMGEADLIAQITLCKKILLELPYSNRVTVTPHTPERIIAHAEQINILTRVHHPLGDVLRVDGDNAVLLSYFRNNVLHLFTASAWVACCFKNNRRMSRIALIRLGVGMYPFLQAELFLPWTEDQFAQHIQQVIELFVREGLLLSAGNEEEDPLTRNTSQTDEVFRLRAISHSLQQAFERYYITISILVKNGPGTLSASELESLCQLAAQRLSLLYASTAPEFFDKGLFRGFIQKLRELNLVWPDTYSKLLFDERLDTSAKDAQVILGRELRHTIERISPEATKPAPK</sequence>